<organism>
    <name type="scientific">Escherichia coli O9:H4 (strain HS)</name>
    <dbReference type="NCBI Taxonomy" id="331112"/>
    <lineage>
        <taxon>Bacteria</taxon>
        <taxon>Pseudomonadati</taxon>
        <taxon>Pseudomonadota</taxon>
        <taxon>Gammaproteobacteria</taxon>
        <taxon>Enterobacterales</taxon>
        <taxon>Enterobacteriaceae</taxon>
        <taxon>Escherichia</taxon>
    </lineage>
</organism>
<evidence type="ECO:0000255" key="1">
    <source>
        <dbReference type="HAMAP-Rule" id="MF_01831"/>
    </source>
</evidence>
<keyword id="KW-0963">Cytoplasm</keyword>
<keyword id="KW-0456">Lyase</keyword>
<keyword id="KW-0663">Pyridoxal phosphate</keyword>
<keyword id="KW-0808">Transferase</keyword>
<comment type="function">
    <text evidence="1">Cysteine desulfurases mobilize the sulfur from L-cysteine to yield L-alanine, an essential step in sulfur metabolism for biosynthesis of a variety of sulfur-containing biomolecules. Component of the suf operon, which is activated and required under specific conditions such as oxidative stress and iron limitation. Acts as a potent selenocysteine lyase in vitro, that mobilizes selenium from L-selenocysteine. Selenocysteine lyase activity is however unsure in vivo.</text>
</comment>
<comment type="catalytic activity">
    <reaction evidence="1">
        <text>(sulfur carrier)-H + L-cysteine = (sulfur carrier)-SH + L-alanine</text>
        <dbReference type="Rhea" id="RHEA:43892"/>
        <dbReference type="Rhea" id="RHEA-COMP:14737"/>
        <dbReference type="Rhea" id="RHEA-COMP:14739"/>
        <dbReference type="ChEBI" id="CHEBI:29917"/>
        <dbReference type="ChEBI" id="CHEBI:35235"/>
        <dbReference type="ChEBI" id="CHEBI:57972"/>
        <dbReference type="ChEBI" id="CHEBI:64428"/>
        <dbReference type="EC" id="2.8.1.7"/>
    </reaction>
</comment>
<comment type="catalytic activity">
    <reaction evidence="1">
        <text>L-selenocysteine + AH2 = hydrogenselenide + L-alanine + A + H(+)</text>
        <dbReference type="Rhea" id="RHEA:11632"/>
        <dbReference type="ChEBI" id="CHEBI:13193"/>
        <dbReference type="ChEBI" id="CHEBI:15378"/>
        <dbReference type="ChEBI" id="CHEBI:17499"/>
        <dbReference type="ChEBI" id="CHEBI:29317"/>
        <dbReference type="ChEBI" id="CHEBI:57843"/>
        <dbReference type="ChEBI" id="CHEBI:57972"/>
        <dbReference type="EC" id="4.4.1.16"/>
    </reaction>
</comment>
<comment type="cofactor">
    <cofactor evidence="1">
        <name>pyridoxal 5'-phosphate</name>
        <dbReference type="ChEBI" id="CHEBI:597326"/>
    </cofactor>
</comment>
<comment type="pathway">
    <text evidence="1">Cofactor biosynthesis; iron-sulfur cluster biosynthesis.</text>
</comment>
<comment type="subunit">
    <text evidence="1">Homodimer. Interacts with SufE and the SufBCD complex composed of SufB, SufC and SufD. The interaction with SufE is required to mediate the direct transfer of the sulfur atom from the S-sulfanylcysteine.</text>
</comment>
<comment type="subcellular location">
    <subcellularLocation>
        <location evidence="1">Cytoplasm</location>
    </subcellularLocation>
</comment>
<comment type="similarity">
    <text evidence="1">Belongs to the class-V pyridoxal-phosphate-dependent aminotransferase family. Csd subfamily.</text>
</comment>
<dbReference type="EC" id="2.8.1.7" evidence="1"/>
<dbReference type="EC" id="4.4.1.16" evidence="1"/>
<dbReference type="EMBL" id="CP000802">
    <property type="protein sequence ID" value="ABV06080.1"/>
    <property type="molecule type" value="Genomic_DNA"/>
</dbReference>
<dbReference type="RefSeq" id="WP_000144539.1">
    <property type="nucleotide sequence ID" value="NC_009800.1"/>
</dbReference>
<dbReference type="SMR" id="A8A0M6"/>
<dbReference type="KEGG" id="ecx:EcHS_A1761"/>
<dbReference type="HOGENOM" id="CLU_003433_2_5_6"/>
<dbReference type="UniPathway" id="UPA00266"/>
<dbReference type="GO" id="GO:0005737">
    <property type="term" value="C:cytoplasm"/>
    <property type="evidence" value="ECO:0007669"/>
    <property type="project" value="UniProtKB-SubCell"/>
</dbReference>
<dbReference type="GO" id="GO:0031071">
    <property type="term" value="F:cysteine desulfurase activity"/>
    <property type="evidence" value="ECO:0007669"/>
    <property type="project" value="UniProtKB-UniRule"/>
</dbReference>
<dbReference type="GO" id="GO:0030170">
    <property type="term" value="F:pyridoxal phosphate binding"/>
    <property type="evidence" value="ECO:0007669"/>
    <property type="project" value="InterPro"/>
</dbReference>
<dbReference type="GO" id="GO:0009000">
    <property type="term" value="F:selenocysteine lyase activity"/>
    <property type="evidence" value="ECO:0007669"/>
    <property type="project" value="UniProtKB-UniRule"/>
</dbReference>
<dbReference type="GO" id="GO:0006534">
    <property type="term" value="P:cysteine metabolic process"/>
    <property type="evidence" value="ECO:0007669"/>
    <property type="project" value="InterPro"/>
</dbReference>
<dbReference type="CDD" id="cd06453">
    <property type="entry name" value="SufS_like"/>
    <property type="match status" value="1"/>
</dbReference>
<dbReference type="FunFam" id="3.40.640.10:FF:000042">
    <property type="entry name" value="Cysteine desulfurase"/>
    <property type="match status" value="1"/>
</dbReference>
<dbReference type="Gene3D" id="3.90.1150.10">
    <property type="entry name" value="Aspartate Aminotransferase, domain 1"/>
    <property type="match status" value="1"/>
</dbReference>
<dbReference type="Gene3D" id="3.40.640.10">
    <property type="entry name" value="Type I PLP-dependent aspartate aminotransferase-like (Major domain)"/>
    <property type="match status" value="1"/>
</dbReference>
<dbReference type="HAMAP" id="MF_01831">
    <property type="entry name" value="SufS_aminotrans_5"/>
    <property type="match status" value="1"/>
</dbReference>
<dbReference type="InterPro" id="IPR000192">
    <property type="entry name" value="Aminotrans_V_dom"/>
</dbReference>
<dbReference type="InterPro" id="IPR020578">
    <property type="entry name" value="Aminotrans_V_PyrdxlP_BS"/>
</dbReference>
<dbReference type="InterPro" id="IPR010970">
    <property type="entry name" value="Cys_dSase_SufS"/>
</dbReference>
<dbReference type="InterPro" id="IPR015424">
    <property type="entry name" value="PyrdxlP-dep_Trfase"/>
</dbReference>
<dbReference type="InterPro" id="IPR015421">
    <property type="entry name" value="PyrdxlP-dep_Trfase_major"/>
</dbReference>
<dbReference type="InterPro" id="IPR015422">
    <property type="entry name" value="PyrdxlP-dep_Trfase_small"/>
</dbReference>
<dbReference type="NCBIfam" id="NF006791">
    <property type="entry name" value="PRK09295.1"/>
    <property type="match status" value="1"/>
</dbReference>
<dbReference type="NCBIfam" id="TIGR01979">
    <property type="entry name" value="sufS"/>
    <property type="match status" value="1"/>
</dbReference>
<dbReference type="PANTHER" id="PTHR43586">
    <property type="entry name" value="CYSTEINE DESULFURASE"/>
    <property type="match status" value="1"/>
</dbReference>
<dbReference type="PANTHER" id="PTHR43586:SF25">
    <property type="entry name" value="CYSTEINE DESULFURASE"/>
    <property type="match status" value="1"/>
</dbReference>
<dbReference type="Pfam" id="PF00266">
    <property type="entry name" value="Aminotran_5"/>
    <property type="match status" value="1"/>
</dbReference>
<dbReference type="SUPFAM" id="SSF53383">
    <property type="entry name" value="PLP-dependent transferases"/>
    <property type="match status" value="1"/>
</dbReference>
<dbReference type="PROSITE" id="PS00595">
    <property type="entry name" value="AA_TRANSFER_CLASS_5"/>
    <property type="match status" value="1"/>
</dbReference>
<protein>
    <recommendedName>
        <fullName evidence="1">Cysteine desulfurase</fullName>
        <ecNumber evidence="1">2.8.1.7</ecNumber>
    </recommendedName>
    <alternativeName>
        <fullName evidence="1">Selenocysteine beta-lyase</fullName>
        <shortName evidence="1">SCL</shortName>
    </alternativeName>
    <alternativeName>
        <fullName evidence="1">Selenocysteine lyase</fullName>
        <ecNumber evidence="1">4.4.1.16</ecNumber>
    </alternativeName>
    <alternativeName>
        <fullName evidence="1">Selenocysteine reductase</fullName>
    </alternativeName>
</protein>
<sequence length="406" mass="44380">MTFSVDKVRADFPVLSREVNGLPLAYLDSAASAQKPGQVIDAEAEFYRHGYAAVHRGIHTLSAQATEKMENVRKQASLFINARSAEELVFVRGTTEGINLVANSWGNSNVRAGDNIIISQMEHHANIVPWQMLCARVGAELRVIPLNPDGTLQLETLPTLFDEKTRLLAITHVSNVLGTENPLAEMITLAHQHGAKVLVDGAQAVMHHLVDVQALDCDFYVFSGHKLYGPTGIGILYVKEALLQEMPPWEGGGSMIATVSLSEGTTWTKAPWRFEAGTPNTGGIIGLGAALEYVSALGLNNIAEYEQNLMHYALSQLESVPDLTLYGPQNRLGVIAFNLGKHHAYDVGSFLDNYGIAVRTGHHCAMPLMAYYNVPAMCRASLAMYNTHEEVDRLVTGLQRIHRLLG</sequence>
<gene>
    <name evidence="1" type="primary">sufS</name>
    <name type="ordered locus">EcHS_A1761</name>
</gene>
<reference key="1">
    <citation type="journal article" date="2008" name="J. Bacteriol.">
        <title>The pangenome structure of Escherichia coli: comparative genomic analysis of E. coli commensal and pathogenic isolates.</title>
        <authorList>
            <person name="Rasko D.A."/>
            <person name="Rosovitz M.J."/>
            <person name="Myers G.S.A."/>
            <person name="Mongodin E.F."/>
            <person name="Fricke W.F."/>
            <person name="Gajer P."/>
            <person name="Crabtree J."/>
            <person name="Sebaihia M."/>
            <person name="Thomson N.R."/>
            <person name="Chaudhuri R."/>
            <person name="Henderson I.R."/>
            <person name="Sperandio V."/>
            <person name="Ravel J."/>
        </authorList>
    </citation>
    <scope>NUCLEOTIDE SEQUENCE [LARGE SCALE GENOMIC DNA]</scope>
    <source>
        <strain>HS</strain>
    </source>
</reference>
<accession>A8A0M6</accession>
<feature type="chain" id="PRO_1000070421" description="Cysteine desulfurase">
    <location>
        <begin position="1"/>
        <end position="406"/>
    </location>
</feature>
<feature type="active site" description="Cysteine persulfide intermediate" evidence="1">
    <location>
        <position position="364"/>
    </location>
</feature>
<feature type="modified residue" description="N6-(pyridoxal phosphate)lysine" evidence="1">
    <location>
        <position position="226"/>
    </location>
</feature>
<proteinExistence type="inferred from homology"/>
<name>SUFS_ECOHS</name>